<comment type="function">
    <text evidence="1">May be involved in ribosome biogenesis.</text>
</comment>
<comment type="subcellular location">
    <subcellularLocation>
        <location evidence="1">Nucleus</location>
        <location evidence="1">Nucleolus</location>
    </subcellularLocation>
</comment>
<comment type="similarity">
    <text evidence="4">Belongs to the SLX9 family.</text>
</comment>
<name>SLX9_MOUSE</name>
<protein>
    <recommendedName>
        <fullName evidence="4">Ribosome biogenesis protein SLX9 homolog</fullName>
    </recommendedName>
</protein>
<feature type="chain" id="PRO_0000079529" description="Ribosome biogenesis protein SLX9 homolog">
    <location>
        <begin position="1"/>
        <end position="219"/>
    </location>
</feature>
<feature type="region of interest" description="Disordered" evidence="3">
    <location>
        <begin position="1"/>
        <end position="43"/>
    </location>
</feature>
<feature type="compositionally biased region" description="Basic residues" evidence="3">
    <location>
        <begin position="1"/>
        <end position="15"/>
    </location>
</feature>
<feature type="modified residue" description="Phosphoserine" evidence="5 6">
    <location>
        <position position="38"/>
    </location>
</feature>
<feature type="modified residue" description="Phosphoserine" evidence="2">
    <location>
        <position position="192"/>
    </location>
</feature>
<gene>
    <name type="primary">Slx9</name>
    <name type="synonym">Fam207a</name>
</gene>
<organism>
    <name type="scientific">Mus musculus</name>
    <name type="common">Mouse</name>
    <dbReference type="NCBI Taxonomy" id="10090"/>
    <lineage>
        <taxon>Eukaryota</taxon>
        <taxon>Metazoa</taxon>
        <taxon>Chordata</taxon>
        <taxon>Craniata</taxon>
        <taxon>Vertebrata</taxon>
        <taxon>Euteleostomi</taxon>
        <taxon>Mammalia</taxon>
        <taxon>Eutheria</taxon>
        <taxon>Euarchontoglires</taxon>
        <taxon>Glires</taxon>
        <taxon>Rodentia</taxon>
        <taxon>Myomorpha</taxon>
        <taxon>Muroidea</taxon>
        <taxon>Muridae</taxon>
        <taxon>Murinae</taxon>
        <taxon>Mus</taxon>
        <taxon>Mus</taxon>
    </lineage>
</organism>
<keyword id="KW-0539">Nucleus</keyword>
<keyword id="KW-0597">Phosphoprotein</keyword>
<keyword id="KW-1185">Reference proteome</keyword>
<accession>P58468</accession>
<evidence type="ECO:0000250" key="1">
    <source>
        <dbReference type="UniProtKB" id="P53251"/>
    </source>
</evidence>
<evidence type="ECO:0000250" key="2">
    <source>
        <dbReference type="UniProtKB" id="Q9NSI2"/>
    </source>
</evidence>
<evidence type="ECO:0000256" key="3">
    <source>
        <dbReference type="SAM" id="MobiDB-lite"/>
    </source>
</evidence>
<evidence type="ECO:0000305" key="4"/>
<evidence type="ECO:0007744" key="5">
    <source>
    </source>
</evidence>
<evidence type="ECO:0007744" key="6">
    <source>
    </source>
</evidence>
<dbReference type="EMBL" id="AF391115">
    <property type="protein sequence ID" value="AAL34506.1"/>
    <property type="molecule type" value="mRNA"/>
</dbReference>
<dbReference type="EMBL" id="BC034216">
    <property type="protein sequence ID" value="AAH34216.1"/>
    <property type="molecule type" value="mRNA"/>
</dbReference>
<dbReference type="CCDS" id="CCDS23955.1"/>
<dbReference type="RefSeq" id="NP_598759.1">
    <property type="nucleotide sequence ID" value="NM_133998.3"/>
</dbReference>
<dbReference type="SMR" id="P58468"/>
<dbReference type="BioGRID" id="224384">
    <property type="interactions" value="1"/>
</dbReference>
<dbReference type="FunCoup" id="P58468">
    <property type="interactions" value="102"/>
</dbReference>
<dbReference type="STRING" id="10090.ENSMUSP00000036382"/>
<dbReference type="iPTMnet" id="P58468"/>
<dbReference type="PhosphoSitePlus" id="P58468"/>
<dbReference type="jPOST" id="P58468"/>
<dbReference type="PaxDb" id="10090-ENSMUSP00000036382"/>
<dbReference type="PeptideAtlas" id="P58468"/>
<dbReference type="ProteomicsDB" id="277019"/>
<dbReference type="Pumba" id="P58468"/>
<dbReference type="Antibodypedia" id="49420">
    <property type="antibodies" value="97 antibodies from 15 providers"/>
</dbReference>
<dbReference type="DNASU" id="108707"/>
<dbReference type="Ensembl" id="ENSMUST00000045454.9">
    <property type="protein sequence ID" value="ENSMUSP00000036382.8"/>
    <property type="gene ID" value="ENSMUSG00000032977.10"/>
</dbReference>
<dbReference type="GeneID" id="108707"/>
<dbReference type="KEGG" id="mmu:108707"/>
<dbReference type="UCSC" id="uc007fvt.2">
    <property type="organism name" value="mouse"/>
</dbReference>
<dbReference type="AGR" id="MGI:1916334"/>
<dbReference type="CTD" id="85395"/>
<dbReference type="MGI" id="MGI:1916334">
    <property type="gene designation" value="Slx9"/>
</dbReference>
<dbReference type="VEuPathDB" id="HostDB:ENSMUSG00000032977"/>
<dbReference type="eggNOG" id="ENOG502S25R">
    <property type="taxonomic scope" value="Eukaryota"/>
</dbReference>
<dbReference type="GeneTree" id="ENSGT00390000015709"/>
<dbReference type="HOGENOM" id="CLU_099072_0_0_1"/>
<dbReference type="InParanoid" id="P58468"/>
<dbReference type="OMA" id="GAKEWAF"/>
<dbReference type="OrthoDB" id="18703at2759"/>
<dbReference type="PhylomeDB" id="P58468"/>
<dbReference type="TreeFam" id="TF336348"/>
<dbReference type="BioGRID-ORCS" id="108707">
    <property type="hits" value="7 hits in 78 CRISPR screens"/>
</dbReference>
<dbReference type="ChiTaRS" id="Fam207a">
    <property type="organism name" value="mouse"/>
</dbReference>
<dbReference type="PRO" id="PR:P58468"/>
<dbReference type="Proteomes" id="UP000000589">
    <property type="component" value="Chromosome 10"/>
</dbReference>
<dbReference type="RNAct" id="P58468">
    <property type="molecule type" value="protein"/>
</dbReference>
<dbReference type="Bgee" id="ENSMUSG00000032977">
    <property type="expression patterns" value="Expressed in urinary bladder urothelium and 264 other cell types or tissues"/>
</dbReference>
<dbReference type="ExpressionAtlas" id="P58468">
    <property type="expression patterns" value="baseline and differential"/>
</dbReference>
<dbReference type="GO" id="GO:0030686">
    <property type="term" value="C:90S preribosome"/>
    <property type="evidence" value="ECO:0007669"/>
    <property type="project" value="InterPro"/>
</dbReference>
<dbReference type="GO" id="GO:0005730">
    <property type="term" value="C:nucleolus"/>
    <property type="evidence" value="ECO:0007669"/>
    <property type="project" value="UniProtKB-SubCell"/>
</dbReference>
<dbReference type="GO" id="GO:0030688">
    <property type="term" value="C:preribosome, small subunit precursor"/>
    <property type="evidence" value="ECO:0007669"/>
    <property type="project" value="InterPro"/>
</dbReference>
<dbReference type="GO" id="GO:0000462">
    <property type="term" value="P:maturation of SSU-rRNA from tricistronic rRNA transcript (SSU-rRNA, 5.8S rRNA, LSU-rRNA)"/>
    <property type="evidence" value="ECO:0007669"/>
    <property type="project" value="InterPro"/>
</dbReference>
<dbReference type="InterPro" id="IPR028160">
    <property type="entry name" value="Slx9-like"/>
</dbReference>
<dbReference type="PANTHER" id="PTHR31109">
    <property type="entry name" value="PROTEIN FAM207A"/>
    <property type="match status" value="1"/>
</dbReference>
<dbReference type="PANTHER" id="PTHR31109:SF2">
    <property type="entry name" value="RIBOSOME BIOGENESIS PROTEIN SLX9 HOMOLOG"/>
    <property type="match status" value="1"/>
</dbReference>
<dbReference type="Pfam" id="PF15341">
    <property type="entry name" value="SLX9"/>
    <property type="match status" value="1"/>
</dbReference>
<proteinExistence type="evidence at protein level"/>
<sequence>MGKVRALRARVHRAAVRPDGDSAPGPVPRAVEPALPQSPAGGAGAKDWTFVHNDIFARTQIDPSALVQRLELDQRSVVSLKRGAEPKAILPKKEKLKLRRERWLQKIEAIKLAEQKLREERKRKAMVVVGDLHPLRDALPELQELEAGRQRQQARRRVTSKPRPVELSRMTTVQRQQLLEEERTRFQKLLASPTYRASPLLAIGQQLAHQMQLEGGKQL</sequence>
<reference key="1">
    <citation type="journal article" date="2001" name="Genomics">
        <title>From PREDs and open reading frames to cDNA isolation: revisiting the human chromosome 21 transcription map.</title>
        <authorList>
            <person name="Reymond A."/>
            <person name="Friedli M."/>
            <person name="Neergaard Henrichsen C."/>
            <person name="Chapot F."/>
            <person name="Deutsch S."/>
            <person name="Ucla C."/>
            <person name="Rossier C."/>
            <person name="Lyle R."/>
            <person name="Guipponi M."/>
            <person name="Antonarakis S.E."/>
        </authorList>
    </citation>
    <scope>NUCLEOTIDE SEQUENCE [MRNA]</scope>
</reference>
<reference key="2">
    <citation type="journal article" date="2004" name="Genome Res.">
        <title>The status, quality, and expansion of the NIH full-length cDNA project: the Mammalian Gene Collection (MGC).</title>
        <authorList>
            <consortium name="The MGC Project Team"/>
        </authorList>
    </citation>
    <scope>NUCLEOTIDE SEQUENCE [LARGE SCALE MRNA]</scope>
    <source>
        <strain>FVB/N-3</strain>
        <tissue>Mammary gland</tissue>
    </source>
</reference>
<reference key="3">
    <citation type="journal article" date="2009" name="Immunity">
        <title>The phagosomal proteome in interferon-gamma-activated macrophages.</title>
        <authorList>
            <person name="Trost M."/>
            <person name="English L."/>
            <person name="Lemieux S."/>
            <person name="Courcelles M."/>
            <person name="Desjardins M."/>
            <person name="Thibault P."/>
        </authorList>
    </citation>
    <scope>PHOSPHORYLATION [LARGE SCALE ANALYSIS] AT SER-38</scope>
    <scope>IDENTIFICATION BY MASS SPECTROMETRY [LARGE SCALE ANALYSIS]</scope>
</reference>
<reference key="4">
    <citation type="journal article" date="2010" name="Cell">
        <title>A tissue-specific atlas of mouse protein phosphorylation and expression.</title>
        <authorList>
            <person name="Huttlin E.L."/>
            <person name="Jedrychowski M.P."/>
            <person name="Elias J.E."/>
            <person name="Goswami T."/>
            <person name="Rad R."/>
            <person name="Beausoleil S.A."/>
            <person name="Villen J."/>
            <person name="Haas W."/>
            <person name="Sowa M.E."/>
            <person name="Gygi S.P."/>
        </authorList>
    </citation>
    <scope>PHOSPHORYLATION [LARGE SCALE ANALYSIS] AT SER-38</scope>
    <scope>IDENTIFICATION BY MASS SPECTROMETRY [LARGE SCALE ANALYSIS]</scope>
    <source>
        <tissue>Pancreas</tissue>
    </source>
</reference>